<organism>
    <name type="scientific">Shigella boydii serotype 18 (strain CDC 3083-94 / BS512)</name>
    <dbReference type="NCBI Taxonomy" id="344609"/>
    <lineage>
        <taxon>Bacteria</taxon>
        <taxon>Pseudomonadati</taxon>
        <taxon>Pseudomonadota</taxon>
        <taxon>Gammaproteobacteria</taxon>
        <taxon>Enterobacterales</taxon>
        <taxon>Enterobacteriaceae</taxon>
        <taxon>Shigella</taxon>
    </lineage>
</organism>
<dbReference type="EC" id="7.-.-.-" evidence="1"/>
<dbReference type="EMBL" id="CP001063">
    <property type="protein sequence ID" value="ACD06472.1"/>
    <property type="molecule type" value="Genomic_DNA"/>
</dbReference>
<dbReference type="RefSeq" id="WP_000231954.1">
    <property type="nucleotide sequence ID" value="NC_010658.1"/>
</dbReference>
<dbReference type="SMR" id="B2U2C9"/>
<dbReference type="STRING" id="344609.SbBS512_E1819"/>
<dbReference type="KEGG" id="sbc:SbBS512_E1819"/>
<dbReference type="HOGENOM" id="CLU_042020_0_0_6"/>
<dbReference type="Proteomes" id="UP000001030">
    <property type="component" value="Chromosome"/>
</dbReference>
<dbReference type="GO" id="GO:0005886">
    <property type="term" value="C:plasma membrane"/>
    <property type="evidence" value="ECO:0007669"/>
    <property type="project" value="UniProtKB-SubCell"/>
</dbReference>
<dbReference type="GO" id="GO:0022900">
    <property type="term" value="P:electron transport chain"/>
    <property type="evidence" value="ECO:0007669"/>
    <property type="project" value="UniProtKB-UniRule"/>
</dbReference>
<dbReference type="GO" id="GO:0055085">
    <property type="term" value="P:transmembrane transport"/>
    <property type="evidence" value="ECO:0007669"/>
    <property type="project" value="InterPro"/>
</dbReference>
<dbReference type="HAMAP" id="MF_00462">
    <property type="entry name" value="RsxD_RnfD"/>
    <property type="match status" value="1"/>
</dbReference>
<dbReference type="InterPro" id="IPR004338">
    <property type="entry name" value="NqrB/RnfD"/>
</dbReference>
<dbReference type="InterPro" id="IPR011303">
    <property type="entry name" value="RnfD_bac"/>
</dbReference>
<dbReference type="NCBIfam" id="NF002011">
    <property type="entry name" value="PRK00816.1"/>
    <property type="match status" value="1"/>
</dbReference>
<dbReference type="NCBIfam" id="TIGR01946">
    <property type="entry name" value="rnfD"/>
    <property type="match status" value="1"/>
</dbReference>
<dbReference type="PANTHER" id="PTHR30578">
    <property type="entry name" value="ELECTRON TRANSPORT COMPLEX PROTEIN RNFD"/>
    <property type="match status" value="1"/>
</dbReference>
<dbReference type="PANTHER" id="PTHR30578:SF0">
    <property type="entry name" value="ION-TRANSLOCATING OXIDOREDUCTASE COMPLEX SUBUNIT D"/>
    <property type="match status" value="1"/>
</dbReference>
<dbReference type="Pfam" id="PF03116">
    <property type="entry name" value="NQR2_RnfD_RnfE"/>
    <property type="match status" value="1"/>
</dbReference>
<name>RSXD_SHIB3</name>
<comment type="function">
    <text evidence="1">Part of a membrane-bound complex that couples electron transfer with translocation of ions across the membrane. Required to maintain the reduced state of SoxR.</text>
</comment>
<comment type="cofactor">
    <cofactor evidence="1">
        <name>FMN</name>
        <dbReference type="ChEBI" id="CHEBI:58210"/>
    </cofactor>
</comment>
<comment type="subunit">
    <text evidence="1">The complex is composed of six subunits: RsxA, RsxB, RsxC, RsxD, RsxE and RsxG.</text>
</comment>
<comment type="subcellular location">
    <subcellularLocation>
        <location evidence="1">Cell inner membrane</location>
        <topology evidence="1">Multi-pass membrane protein</topology>
    </subcellularLocation>
</comment>
<comment type="similarity">
    <text evidence="1">Belongs to the NqrB/RnfD family.</text>
</comment>
<accession>B2U2C9</accession>
<proteinExistence type="inferred from homology"/>
<reference key="1">
    <citation type="submission" date="2008-05" db="EMBL/GenBank/DDBJ databases">
        <title>Complete sequence of Shigella boydii serotype 18 strain BS512.</title>
        <authorList>
            <person name="Rasko D.A."/>
            <person name="Rosovitz M."/>
            <person name="Maurelli A.T."/>
            <person name="Myers G."/>
            <person name="Seshadri R."/>
            <person name="Cer R."/>
            <person name="Jiang L."/>
            <person name="Ravel J."/>
            <person name="Sebastian Y."/>
        </authorList>
    </citation>
    <scope>NUCLEOTIDE SEQUENCE [LARGE SCALE GENOMIC DNA]</scope>
    <source>
        <strain>CDC 3083-94 / BS512</strain>
    </source>
</reference>
<gene>
    <name evidence="1" type="primary">rsxD</name>
    <name type="synonym">rnfD</name>
    <name type="ordered locus">SbBS512_E1819</name>
</gene>
<evidence type="ECO:0000255" key="1">
    <source>
        <dbReference type="HAMAP-Rule" id="MF_00462"/>
    </source>
</evidence>
<sequence>MVFRIASSPYTHNQRQTSRIMLLVLLAAVPGIAAQLWFFGWGTLVQILLASVSTLLAEALVLKLRKQSVAATLKDNSALLTGLLLAVSIPPLAPWWMVVLGTVFAVIIAKQLYGGLGQNPFNPAMIGYVVLLISFPVQMTSWLPPHEIAVNIPGFIDAIQVIFSGHTASGADMNTLHLGIDGISQATPLDTFKTSVRAGHSVEQIMQYPIYSGILAGAGWQWVNLAWLAGGLWLLWQKAIRWHIPLSFLVTLALCATLGWLFSPETLAAPQIHLLSGATMLGAFFILTDPVTASTTNRGRLIFGALAGLLVWLIRSFGGYPDGVAFAVLLANITVPLIDYYTRPRVYGHRKG</sequence>
<protein>
    <recommendedName>
        <fullName evidence="1">Ion-translocating oxidoreductase complex subunit D</fullName>
        <ecNumber evidence="1">7.-.-.-</ecNumber>
    </recommendedName>
    <alternativeName>
        <fullName evidence="1">Rsx electron transport complex subunit D</fullName>
    </alternativeName>
</protein>
<keyword id="KW-0997">Cell inner membrane</keyword>
<keyword id="KW-1003">Cell membrane</keyword>
<keyword id="KW-0249">Electron transport</keyword>
<keyword id="KW-0285">Flavoprotein</keyword>
<keyword id="KW-0288">FMN</keyword>
<keyword id="KW-0472">Membrane</keyword>
<keyword id="KW-0597">Phosphoprotein</keyword>
<keyword id="KW-1185">Reference proteome</keyword>
<keyword id="KW-1278">Translocase</keyword>
<keyword id="KW-0812">Transmembrane</keyword>
<keyword id="KW-1133">Transmembrane helix</keyword>
<keyword id="KW-0813">Transport</keyword>
<feature type="chain" id="PRO_1000125400" description="Ion-translocating oxidoreductase complex subunit D">
    <location>
        <begin position="1"/>
        <end position="352"/>
    </location>
</feature>
<feature type="transmembrane region" description="Helical" evidence="1">
    <location>
        <begin position="20"/>
        <end position="40"/>
    </location>
</feature>
<feature type="transmembrane region" description="Helical" evidence="1">
    <location>
        <begin position="42"/>
        <end position="62"/>
    </location>
</feature>
<feature type="transmembrane region" description="Helical" evidence="1">
    <location>
        <begin position="89"/>
        <end position="109"/>
    </location>
</feature>
<feature type="transmembrane region" description="Helical" evidence="1">
    <location>
        <begin position="123"/>
        <end position="143"/>
    </location>
</feature>
<feature type="transmembrane region" description="Helical" evidence="1">
    <location>
        <begin position="214"/>
        <end position="234"/>
    </location>
</feature>
<feature type="transmembrane region" description="Helical" evidence="1">
    <location>
        <begin position="242"/>
        <end position="262"/>
    </location>
</feature>
<feature type="transmembrane region" description="Helical" evidence="1">
    <location>
        <begin position="267"/>
        <end position="287"/>
    </location>
</feature>
<feature type="transmembrane region" description="Helical" evidence="1">
    <location>
        <begin position="301"/>
        <end position="321"/>
    </location>
</feature>
<feature type="transmembrane region" description="Helical" evidence="1">
    <location>
        <begin position="322"/>
        <end position="342"/>
    </location>
</feature>
<feature type="modified residue" description="FMN phosphoryl threonine" evidence="1">
    <location>
        <position position="187"/>
    </location>
</feature>